<reference key="1">
    <citation type="journal article" date="2016" name="Genome Announc.">
        <title>Complete genome sequence of Alkaliphilus metalliredigens strain QYMF, an alkaliphilic and metal-reducing bacterium isolated from borax-contaminated leachate ponds.</title>
        <authorList>
            <person name="Hwang C."/>
            <person name="Copeland A."/>
            <person name="Lucas S."/>
            <person name="Lapidus A."/>
            <person name="Barry K."/>
            <person name="Detter J.C."/>
            <person name="Glavina Del Rio T."/>
            <person name="Hammon N."/>
            <person name="Israni S."/>
            <person name="Dalin E."/>
            <person name="Tice H."/>
            <person name="Pitluck S."/>
            <person name="Chertkov O."/>
            <person name="Brettin T."/>
            <person name="Bruce D."/>
            <person name="Han C."/>
            <person name="Schmutz J."/>
            <person name="Larimer F."/>
            <person name="Land M.L."/>
            <person name="Hauser L."/>
            <person name="Kyrpides N."/>
            <person name="Mikhailova N."/>
            <person name="Ye Q."/>
            <person name="Zhou J."/>
            <person name="Richardson P."/>
            <person name="Fields M.W."/>
        </authorList>
    </citation>
    <scope>NUCLEOTIDE SEQUENCE [LARGE SCALE GENOMIC DNA]</scope>
    <source>
        <strain>QYMF</strain>
    </source>
</reference>
<gene>
    <name evidence="1" type="primary">rplA</name>
    <name type="ordered locus">Amet_4489</name>
</gene>
<feature type="chain" id="PRO_1000067524" description="Large ribosomal subunit protein uL1">
    <location>
        <begin position="1"/>
        <end position="232"/>
    </location>
</feature>
<dbReference type="EMBL" id="CP000724">
    <property type="protein sequence ID" value="ABR50561.1"/>
    <property type="molecule type" value="Genomic_DNA"/>
</dbReference>
<dbReference type="RefSeq" id="WP_012065452.1">
    <property type="nucleotide sequence ID" value="NC_009633.1"/>
</dbReference>
<dbReference type="SMR" id="A6TWJ3"/>
<dbReference type="STRING" id="293826.Amet_4489"/>
<dbReference type="KEGG" id="amt:Amet_4489"/>
<dbReference type="eggNOG" id="COG0081">
    <property type="taxonomic scope" value="Bacteria"/>
</dbReference>
<dbReference type="HOGENOM" id="CLU_062853_0_0_9"/>
<dbReference type="OrthoDB" id="9803740at2"/>
<dbReference type="Proteomes" id="UP000001572">
    <property type="component" value="Chromosome"/>
</dbReference>
<dbReference type="GO" id="GO:0015934">
    <property type="term" value="C:large ribosomal subunit"/>
    <property type="evidence" value="ECO:0007669"/>
    <property type="project" value="InterPro"/>
</dbReference>
<dbReference type="GO" id="GO:0019843">
    <property type="term" value="F:rRNA binding"/>
    <property type="evidence" value="ECO:0007669"/>
    <property type="project" value="UniProtKB-UniRule"/>
</dbReference>
<dbReference type="GO" id="GO:0003735">
    <property type="term" value="F:structural constituent of ribosome"/>
    <property type="evidence" value="ECO:0007669"/>
    <property type="project" value="InterPro"/>
</dbReference>
<dbReference type="GO" id="GO:0000049">
    <property type="term" value="F:tRNA binding"/>
    <property type="evidence" value="ECO:0007669"/>
    <property type="project" value="UniProtKB-KW"/>
</dbReference>
<dbReference type="GO" id="GO:0006417">
    <property type="term" value="P:regulation of translation"/>
    <property type="evidence" value="ECO:0007669"/>
    <property type="project" value="UniProtKB-KW"/>
</dbReference>
<dbReference type="GO" id="GO:0006412">
    <property type="term" value="P:translation"/>
    <property type="evidence" value="ECO:0007669"/>
    <property type="project" value="UniProtKB-UniRule"/>
</dbReference>
<dbReference type="CDD" id="cd00403">
    <property type="entry name" value="Ribosomal_L1"/>
    <property type="match status" value="1"/>
</dbReference>
<dbReference type="FunFam" id="3.40.50.790:FF:000001">
    <property type="entry name" value="50S ribosomal protein L1"/>
    <property type="match status" value="1"/>
</dbReference>
<dbReference type="Gene3D" id="3.30.190.20">
    <property type="match status" value="1"/>
</dbReference>
<dbReference type="Gene3D" id="3.40.50.790">
    <property type="match status" value="1"/>
</dbReference>
<dbReference type="HAMAP" id="MF_01318_B">
    <property type="entry name" value="Ribosomal_uL1_B"/>
    <property type="match status" value="1"/>
</dbReference>
<dbReference type="InterPro" id="IPR005878">
    <property type="entry name" value="Ribosom_uL1_bac-type"/>
</dbReference>
<dbReference type="InterPro" id="IPR002143">
    <property type="entry name" value="Ribosomal_uL1"/>
</dbReference>
<dbReference type="InterPro" id="IPR023674">
    <property type="entry name" value="Ribosomal_uL1-like"/>
</dbReference>
<dbReference type="InterPro" id="IPR028364">
    <property type="entry name" value="Ribosomal_uL1/biogenesis"/>
</dbReference>
<dbReference type="InterPro" id="IPR016095">
    <property type="entry name" value="Ribosomal_uL1_3-a/b-sand"/>
</dbReference>
<dbReference type="InterPro" id="IPR023673">
    <property type="entry name" value="Ribosomal_uL1_CS"/>
</dbReference>
<dbReference type="NCBIfam" id="TIGR01169">
    <property type="entry name" value="rplA_bact"/>
    <property type="match status" value="1"/>
</dbReference>
<dbReference type="PANTHER" id="PTHR36427">
    <property type="entry name" value="54S RIBOSOMAL PROTEIN L1, MITOCHONDRIAL"/>
    <property type="match status" value="1"/>
</dbReference>
<dbReference type="PANTHER" id="PTHR36427:SF3">
    <property type="entry name" value="LARGE RIBOSOMAL SUBUNIT PROTEIN UL1M"/>
    <property type="match status" value="1"/>
</dbReference>
<dbReference type="Pfam" id="PF00687">
    <property type="entry name" value="Ribosomal_L1"/>
    <property type="match status" value="1"/>
</dbReference>
<dbReference type="PIRSF" id="PIRSF002155">
    <property type="entry name" value="Ribosomal_L1"/>
    <property type="match status" value="1"/>
</dbReference>
<dbReference type="SUPFAM" id="SSF56808">
    <property type="entry name" value="Ribosomal protein L1"/>
    <property type="match status" value="1"/>
</dbReference>
<dbReference type="PROSITE" id="PS01199">
    <property type="entry name" value="RIBOSOMAL_L1"/>
    <property type="match status" value="1"/>
</dbReference>
<proteinExistence type="inferred from homology"/>
<evidence type="ECO:0000255" key="1">
    <source>
        <dbReference type="HAMAP-Rule" id="MF_01318"/>
    </source>
</evidence>
<evidence type="ECO:0000305" key="2"/>
<protein>
    <recommendedName>
        <fullName evidence="1">Large ribosomal subunit protein uL1</fullName>
    </recommendedName>
    <alternativeName>
        <fullName evidence="2">50S ribosomal protein L1</fullName>
    </alternativeName>
</protein>
<name>RL1_ALKMQ</name>
<sequence length="232" mass="25168">MPKRGKKYQEALKQFDREKSYDPNEAVVLVKKTATAKFDETIEAHIKLGVDSRHADQQVRGAIVLPHGTGKTAKVLVFAKGEKVTEAEKAGADYVGSDDLVAKIQGENWFDFDVVVATPDMMGVVGRLGRVLGPKGLMPNPKSGTVTFDLERAVKEIKAGKVEYRLDKTNIIHVPIGKASFEEAQLAENFKTLLEAVAKAKPAAAKGQYFKSVSVTSTMGPGIRVNPSKVSE</sequence>
<comment type="function">
    <text evidence="1">Binds directly to 23S rRNA. The L1 stalk is quite mobile in the ribosome, and is involved in E site tRNA release.</text>
</comment>
<comment type="function">
    <text evidence="1">Protein L1 is also a translational repressor protein, it controls the translation of the L11 operon by binding to its mRNA.</text>
</comment>
<comment type="subunit">
    <text evidence="1">Part of the 50S ribosomal subunit.</text>
</comment>
<comment type="similarity">
    <text evidence="1">Belongs to the universal ribosomal protein uL1 family.</text>
</comment>
<organism>
    <name type="scientific">Alkaliphilus metalliredigens (strain QYMF)</name>
    <dbReference type="NCBI Taxonomy" id="293826"/>
    <lineage>
        <taxon>Bacteria</taxon>
        <taxon>Bacillati</taxon>
        <taxon>Bacillota</taxon>
        <taxon>Clostridia</taxon>
        <taxon>Peptostreptococcales</taxon>
        <taxon>Natronincolaceae</taxon>
        <taxon>Alkaliphilus</taxon>
    </lineage>
</organism>
<keyword id="KW-1185">Reference proteome</keyword>
<keyword id="KW-0678">Repressor</keyword>
<keyword id="KW-0687">Ribonucleoprotein</keyword>
<keyword id="KW-0689">Ribosomal protein</keyword>
<keyword id="KW-0694">RNA-binding</keyword>
<keyword id="KW-0699">rRNA-binding</keyword>
<keyword id="KW-0810">Translation regulation</keyword>
<keyword id="KW-0820">tRNA-binding</keyword>
<accession>A6TWJ3</accession>